<sequence>MESFVAMKVVCIILLFVIAAEAESINEKSDVEPSKGKNNSGLQFKFPPYVPNHKAFALRLLSLCEQGIYGTKINDLKVDFKNCTFLCIRKYENLTLPLPEDTPCGPNNQTCHKKDECVGYIPGC</sequence>
<organism>
    <name type="scientific">Ixodes ricinus</name>
    <name type="common">Common tick</name>
    <name type="synonym">Acarus ricinus</name>
    <dbReference type="NCBI Taxonomy" id="34613"/>
    <lineage>
        <taxon>Eukaryota</taxon>
        <taxon>Metazoa</taxon>
        <taxon>Ecdysozoa</taxon>
        <taxon>Arthropoda</taxon>
        <taxon>Chelicerata</taxon>
        <taxon>Arachnida</taxon>
        <taxon>Acari</taxon>
        <taxon>Parasitiformes</taxon>
        <taxon>Ixodida</taxon>
        <taxon>Ixodoidea</taxon>
        <taxon>Ixodidae</taxon>
        <taxon>Ixodinae</taxon>
        <taxon>Ixodes</taxon>
    </lineage>
</organism>
<protein>
    <recommendedName>
        <fullName evidence="7">Salivary protein 15 Iric-3</fullName>
        <shortName evidence="7">Salp15 Iric-3</shortName>
    </recommendedName>
    <alternativeName>
        <fullName evidence="8">Salp15-like</fullName>
    </alternativeName>
</protein>
<feature type="signal peptide" evidence="3">
    <location>
        <begin position="1"/>
        <end position="22"/>
    </location>
</feature>
<feature type="chain" id="PRO_5002718531" description="Salivary protein 15 Iric-3">
    <location>
        <begin position="23"/>
        <end position="124"/>
    </location>
</feature>
<feature type="region of interest" description="CD4-binding" evidence="2">
    <location>
        <begin position="105"/>
        <end position="124"/>
    </location>
</feature>
<feature type="glycosylation site" description="N-linked (GlcNAc...) asparagine" evidence="4">
    <location>
        <position position="82"/>
    </location>
</feature>
<feature type="glycosylation site" description="N-linked (GlcNAc...) asparagine" evidence="4">
    <location>
        <position position="93"/>
    </location>
</feature>
<evidence type="ECO:0000250" key="1">
    <source>
        <dbReference type="UniProtKB" id="A8CZZ0"/>
    </source>
</evidence>
<evidence type="ECO:0000250" key="2">
    <source>
        <dbReference type="UniProtKB" id="Q95WZ4"/>
    </source>
</evidence>
<evidence type="ECO:0000255" key="3"/>
<evidence type="ECO:0000255" key="4">
    <source>
        <dbReference type="PROSITE-ProRule" id="PRU00498"/>
    </source>
</evidence>
<evidence type="ECO:0000269" key="5">
    <source>
    </source>
</evidence>
<evidence type="ECO:0000269" key="6">
    <source>
    </source>
</evidence>
<evidence type="ECO:0000303" key="7">
    <source>
    </source>
</evidence>
<evidence type="ECO:0000305" key="8"/>
<evidence type="ECO:0000305" key="9">
    <source>
    </source>
</evidence>
<evidence type="ECO:0000312" key="10">
    <source>
        <dbReference type="EMBL" id="ABU93615.1"/>
    </source>
</evidence>
<dbReference type="EMBL" id="EU128528">
    <property type="protein sequence ID" value="ABU93615.1"/>
    <property type="molecule type" value="mRNA"/>
</dbReference>
<dbReference type="GO" id="GO:0005576">
    <property type="term" value="C:extracellular region"/>
    <property type="evidence" value="ECO:0007669"/>
    <property type="project" value="UniProtKB-SubCell"/>
</dbReference>
<dbReference type="InterPro" id="IPR021971">
    <property type="entry name" value="Salp15"/>
</dbReference>
<dbReference type="Pfam" id="PF12115">
    <property type="entry name" value="Salp15"/>
    <property type="match status" value="1"/>
</dbReference>
<reference evidence="10" key="1">
    <citation type="journal article" date="2007" name="Vector Borne Zoonotic Dis.">
        <title>Identification of Salp15 homologues in Ixodes ricinus ticks.</title>
        <authorList>
            <person name="Hovius J.W."/>
            <person name="Ramamoorthi N."/>
            <person name="Veer C.V."/>
            <person name="De Groot K.A."/>
            <person name="Nijhof A.M."/>
            <person name="Jongejan F."/>
            <person name="Van Dam A.P."/>
            <person name="Fikrig E."/>
        </authorList>
    </citation>
    <scope>NUCLEOTIDE SEQUENCE [MRNA]</scope>
    <scope>INDUCTION</scope>
    <scope>TISSUE SPECIFICITY</scope>
    <source>
        <tissue>Salivary gland</tissue>
    </source>
</reference>
<reference key="2">
    <citation type="journal article" date="2021" name="Ticks Tick Borne Dis.">
        <title>Strong interactions between Salp15 homologues from the tick I. ricinus and distinct types of the outer surface OspC protein from Borrelia.</title>
        <authorList>
            <person name="Bierwagen P."/>
            <person name="Sliwiak J."/>
            <person name="Jaskolski M."/>
            <person name="Urbanowicz A."/>
        </authorList>
    </citation>
    <scope>FUNCTION</scope>
    <scope>INTERACTION WITH BORRELIA OUTER SURFACE PROTEIN C</scope>
    <scope>RECOMBINANT EXPRESSION</scope>
</reference>
<keyword id="KW-0325">Glycoprotein</keyword>
<keyword id="KW-0964">Secreted</keyword>
<keyword id="KW-0732">Signal</keyword>
<proteinExistence type="evidence at protein level"/>
<name>SP153_IXORI</name>
<accession>A8CZZ8</accession>
<comment type="function">
    <text evidence="1 2 6">Salivary tick protein that downregulates host immune system by binding to both dendritic cells, and CD4(+) T cells. Specifically binds to the CD4 coreceptor on T cells. This interaction prevents the activation of the Src kinase, Lck, and its downstream substrate Zap-70, and results in deficient activation of PLCgamma1, the repression of calcium fluxes triggered by T-cell antigen receptor (TCR) ligation, and a subsequent reduction in interleukin-2 production. This salivary protein also binds to DC-SIGN (CD209) on dendritic cells (DC) and activates the Raf-1 kinase/MEK signaling pathway that results in down-regulating expression of pro-inflammatory cytokines. Furthermore, it inhibits T cell proliferation induced by DCs (By similarity). In addition, it inhibits in vitro keratinocyte inflammation induced by Borrelia burgdorferi or by the major outer surface protein (OspC) of Borrelia (By similarity). In addition, it downregulates chemokines and monocyte chemoattractant protein 1, as well as several antimicrobial peptides such as defensins, cathelicidin, psoriasin, and RNase 7 (By similarity). Apart from its immunomodulatory activities, it is also associated with protection of Borrelia spirochetes from antibody-mediated killing through its binding to OspC (By similarity) (PubMed:33401196). In vivo, tests on different immune disease animal models show promising therapeutic results, e.g., in inhibiting HIV infection, experimental autoimmune encephalomyelitis, transplantation rejection, and asthma (By similarity).</text>
</comment>
<comment type="subunit">
    <text evidence="2 6">Interacts with host CD4 (By similarity). Interacts with host DC-SIGN (CD209) (By similarity). Interacts with Borrelia outer surface protein C (OspC) (PubMed:33401196).</text>
</comment>
<comment type="subcellular location">
    <subcellularLocation>
        <location evidence="9">Secreted</location>
    </subcellularLocation>
</comment>
<comment type="tissue specificity">
    <text evidence="5">Expressed in salivary glands (PubMed:17896872). Detected in fed adult female (PubMed:17896872).</text>
</comment>
<comment type="induction">
    <text evidence="2 9">By feeding (Probable). By the presence of Borrelia burgdorferi (By similarity).</text>
</comment>
<comment type="similarity">
    <text evidence="8">Belongs to the salp15 family.</text>
</comment>